<organism>
    <name type="scientific">Saccharomyces cerevisiae (strain ATCC 204508 / S288c)</name>
    <name type="common">Baker's yeast</name>
    <dbReference type="NCBI Taxonomy" id="559292"/>
    <lineage>
        <taxon>Eukaryota</taxon>
        <taxon>Fungi</taxon>
        <taxon>Dikarya</taxon>
        <taxon>Ascomycota</taxon>
        <taxon>Saccharomycotina</taxon>
        <taxon>Saccharomycetes</taxon>
        <taxon>Saccharomycetales</taxon>
        <taxon>Saccharomycetaceae</taxon>
        <taxon>Saccharomyces</taxon>
    </lineage>
</organism>
<gene>
    <name type="primary">UGA1</name>
    <name type="ordered locus">YGR019W</name>
</gene>
<protein>
    <recommendedName>
        <fullName>4-aminobutyrate aminotransferase</fullName>
        <ecNumber evidence="4 8">2.6.1.19</ecNumber>
    </recommendedName>
    <alternativeName>
        <fullName>GABA aminotransferase</fullName>
        <shortName>GABA-AT</shortName>
    </alternativeName>
    <alternativeName>
        <fullName>Gamma-amino-N-butyrate transaminase</fullName>
        <shortName>GABA transaminase</shortName>
    </alternativeName>
</protein>
<accession>P17649</accession>
<accession>A5H0J7</accession>
<accession>D6VUF4</accession>
<name>GABAT_YEAST</name>
<dbReference type="EC" id="2.6.1.19" evidence="4 8"/>
<dbReference type="EMBL" id="X52600">
    <property type="protein sequence ID" value="CAA36833.1"/>
    <property type="molecule type" value="Genomic_DNA"/>
</dbReference>
<dbReference type="EMBL" id="DQ512723">
    <property type="protein sequence ID" value="ABF58895.1"/>
    <property type="molecule type" value="Genomic_DNA"/>
</dbReference>
<dbReference type="EMBL" id="Z72804">
    <property type="protein sequence ID" value="CAA97002.1"/>
    <property type="molecule type" value="Genomic_DNA"/>
</dbReference>
<dbReference type="EMBL" id="AY692904">
    <property type="protein sequence ID" value="AAT92923.1"/>
    <property type="molecule type" value="Genomic_DNA"/>
</dbReference>
<dbReference type="EMBL" id="BK006941">
    <property type="protein sequence ID" value="DAA08115.1"/>
    <property type="molecule type" value="Genomic_DNA"/>
</dbReference>
<dbReference type="PIR" id="S64310">
    <property type="entry name" value="S64310"/>
</dbReference>
<dbReference type="RefSeq" id="NP_011533.3">
    <property type="nucleotide sequence ID" value="NM_001181148.3"/>
</dbReference>
<dbReference type="SMR" id="P17649"/>
<dbReference type="BioGRID" id="33261">
    <property type="interactions" value="76"/>
</dbReference>
<dbReference type="FunCoup" id="P17649">
    <property type="interactions" value="409"/>
</dbReference>
<dbReference type="IntAct" id="P17649">
    <property type="interactions" value="4"/>
</dbReference>
<dbReference type="STRING" id="4932.YGR019W"/>
<dbReference type="iPTMnet" id="P17649"/>
<dbReference type="PaxDb" id="4932-YGR019W"/>
<dbReference type="PeptideAtlas" id="P17649"/>
<dbReference type="EnsemblFungi" id="YGR019W_mRNA">
    <property type="protein sequence ID" value="YGR019W"/>
    <property type="gene ID" value="YGR019W"/>
</dbReference>
<dbReference type="GeneID" id="852902"/>
<dbReference type="KEGG" id="sce:YGR019W"/>
<dbReference type="AGR" id="SGD:S000003251"/>
<dbReference type="SGD" id="S000003251">
    <property type="gene designation" value="UGA1"/>
</dbReference>
<dbReference type="VEuPathDB" id="FungiDB:YGR019W"/>
<dbReference type="eggNOG" id="KOG1405">
    <property type="taxonomic scope" value="Eukaryota"/>
</dbReference>
<dbReference type="GeneTree" id="ENSGT00550000074885"/>
<dbReference type="HOGENOM" id="CLU_016922_12_0_1"/>
<dbReference type="InParanoid" id="P17649"/>
<dbReference type="OMA" id="HDPEIVP"/>
<dbReference type="OrthoDB" id="10260828at2759"/>
<dbReference type="BioCyc" id="MetaCyc:YGR019W-MONOMER"/>
<dbReference type="BioCyc" id="YEAST:YGR019W-MONOMER"/>
<dbReference type="BRENDA" id="2.6.1.19">
    <property type="organism ID" value="984"/>
</dbReference>
<dbReference type="Reactome" id="R-SCE-916853">
    <property type="pathway name" value="Degradation of GABA"/>
</dbReference>
<dbReference type="BioGRID-ORCS" id="852902">
    <property type="hits" value="4 hits in 10 CRISPR screens"/>
</dbReference>
<dbReference type="PRO" id="PR:P17649"/>
<dbReference type="Proteomes" id="UP000002311">
    <property type="component" value="Chromosome VII"/>
</dbReference>
<dbReference type="RNAct" id="P17649">
    <property type="molecule type" value="protein"/>
</dbReference>
<dbReference type="GO" id="GO:0005829">
    <property type="term" value="C:cytosol"/>
    <property type="evidence" value="ECO:0000314"/>
    <property type="project" value="SGD"/>
</dbReference>
<dbReference type="GO" id="GO:0005739">
    <property type="term" value="C:mitochondrion"/>
    <property type="evidence" value="ECO:0000318"/>
    <property type="project" value="GO_Central"/>
</dbReference>
<dbReference type="GO" id="GO:0034386">
    <property type="term" value="F:4-aminobutyrate:2-oxoglutarate transaminase activity"/>
    <property type="evidence" value="ECO:0000315"/>
    <property type="project" value="SGD"/>
</dbReference>
<dbReference type="GO" id="GO:0030170">
    <property type="term" value="F:pyridoxal phosphate binding"/>
    <property type="evidence" value="ECO:0000318"/>
    <property type="project" value="GO_Central"/>
</dbReference>
<dbReference type="GO" id="GO:0009450">
    <property type="term" value="P:gamma-aminobutyric acid catabolic process"/>
    <property type="evidence" value="ECO:0000315"/>
    <property type="project" value="SGD"/>
</dbReference>
<dbReference type="CDD" id="cd00610">
    <property type="entry name" value="OAT_like"/>
    <property type="match status" value="1"/>
</dbReference>
<dbReference type="FunFam" id="3.40.640.10:FF:000029">
    <property type="entry name" value="4-aminobutyrate aminotransferase, mitochondrial"/>
    <property type="match status" value="1"/>
</dbReference>
<dbReference type="Gene3D" id="3.90.1150.10">
    <property type="entry name" value="Aspartate Aminotransferase, domain 1"/>
    <property type="match status" value="1"/>
</dbReference>
<dbReference type="Gene3D" id="3.40.640.10">
    <property type="entry name" value="Type I PLP-dependent aspartate aminotransferase-like (Major domain)"/>
    <property type="match status" value="1"/>
</dbReference>
<dbReference type="InterPro" id="IPR004631">
    <property type="entry name" value="4NH2But_aminotransferase_euk"/>
</dbReference>
<dbReference type="InterPro" id="IPR005814">
    <property type="entry name" value="Aminotrans_3"/>
</dbReference>
<dbReference type="InterPro" id="IPR049704">
    <property type="entry name" value="Aminotrans_3_PPA_site"/>
</dbReference>
<dbReference type="InterPro" id="IPR015424">
    <property type="entry name" value="PyrdxlP-dep_Trfase"/>
</dbReference>
<dbReference type="InterPro" id="IPR015421">
    <property type="entry name" value="PyrdxlP-dep_Trfase_major"/>
</dbReference>
<dbReference type="InterPro" id="IPR015422">
    <property type="entry name" value="PyrdxlP-dep_Trfase_small"/>
</dbReference>
<dbReference type="NCBIfam" id="TIGR00699">
    <property type="entry name" value="GABAtrns_euk"/>
    <property type="match status" value="1"/>
</dbReference>
<dbReference type="PANTHER" id="PTHR43206:SF1">
    <property type="entry name" value="4-AMINOBUTYRATE AMINOTRANSFERASE, MITOCHONDRIAL"/>
    <property type="match status" value="1"/>
</dbReference>
<dbReference type="PANTHER" id="PTHR43206">
    <property type="entry name" value="AMINOTRANSFERASE"/>
    <property type="match status" value="1"/>
</dbReference>
<dbReference type="Pfam" id="PF00202">
    <property type="entry name" value="Aminotran_3"/>
    <property type="match status" value="1"/>
</dbReference>
<dbReference type="PIRSF" id="PIRSF000521">
    <property type="entry name" value="Transaminase_4ab_Lys_Orn"/>
    <property type="match status" value="1"/>
</dbReference>
<dbReference type="SUPFAM" id="SSF53383">
    <property type="entry name" value="PLP-dependent transferases"/>
    <property type="match status" value="1"/>
</dbReference>
<dbReference type="PROSITE" id="PS00600">
    <property type="entry name" value="AA_TRANSFER_CLASS_3"/>
    <property type="match status" value="1"/>
</dbReference>
<evidence type="ECO:0000250" key="1">
    <source>
        <dbReference type="UniProtKB" id="P80147"/>
    </source>
</evidence>
<evidence type="ECO:0000269" key="2">
    <source>
    </source>
</evidence>
<evidence type="ECO:0000269" key="3">
    <source>
    </source>
</evidence>
<evidence type="ECO:0000269" key="4">
    <source>
    </source>
</evidence>
<evidence type="ECO:0000269" key="5">
    <source>
    </source>
</evidence>
<evidence type="ECO:0000269" key="6">
    <source>
    </source>
</evidence>
<evidence type="ECO:0000305" key="7"/>
<evidence type="ECO:0000305" key="8">
    <source>
    </source>
</evidence>
<proteinExistence type="evidence at protein level"/>
<reference key="1">
    <citation type="journal article" date="1990" name="Nucleic Acids Res.">
        <title>Nucleotide sequence of the yeast UGA1 gene encoding GABA transaminase.</title>
        <authorList>
            <person name="Andre B."/>
            <person name="Jauniaux J.-C."/>
        </authorList>
    </citation>
    <scope>NUCLEOTIDE SEQUENCE [GENOMIC DNA]</scope>
    <source>
        <strain>Sigma 1278B</strain>
    </source>
</reference>
<reference key="2">
    <citation type="journal article" date="2007" name="FEBS J.">
        <title>A gene duplication led to specialized gamma-aminobutyrate and beta-alanine aminotransferase in yeast.</title>
        <authorList>
            <person name="Andersen G."/>
            <person name="Andersen B."/>
            <person name="Dobritzsch D."/>
            <person name="Schnackerz K.D."/>
            <person name="Piskur J."/>
        </authorList>
    </citation>
    <scope>NUCLEOTIDE SEQUENCE [GENOMIC DNA]</scope>
    <scope>FUNCTION</scope>
    <scope>SUBUNIT</scope>
    <scope>CATALYTIC ACTIVITY</scope>
    <scope>BIOPHYSICOCHEMICAL PROPERTIES</scope>
    <scope>COFACTOR</scope>
    <source>
        <strain>ATCC 18824 / CBS 1171 / DSM 70449 / IFO 10217 / NRRL Y-12632</strain>
    </source>
</reference>
<reference key="3">
    <citation type="journal article" date="1997" name="Yeast">
        <title>Sequence analysis of 203 kilobases from Saccharomyces cerevisiae chromosome VII.</title>
        <authorList>
            <person name="Rieger M."/>
            <person name="Brueckner M."/>
            <person name="Schaefer M."/>
            <person name="Mueller-Auer S."/>
        </authorList>
    </citation>
    <scope>NUCLEOTIDE SEQUENCE [GENOMIC DNA]</scope>
    <source>
        <strain>ATCC 204508 / S288c</strain>
    </source>
</reference>
<reference key="4">
    <citation type="journal article" date="1997" name="Nature">
        <title>The nucleotide sequence of Saccharomyces cerevisiae chromosome VII.</title>
        <authorList>
            <person name="Tettelin H."/>
            <person name="Agostoni-Carbone M.L."/>
            <person name="Albermann K."/>
            <person name="Albers M."/>
            <person name="Arroyo J."/>
            <person name="Backes U."/>
            <person name="Barreiros T."/>
            <person name="Bertani I."/>
            <person name="Bjourson A.J."/>
            <person name="Brueckner M."/>
            <person name="Bruschi C.V."/>
            <person name="Carignani G."/>
            <person name="Castagnoli L."/>
            <person name="Cerdan E."/>
            <person name="Clemente M.L."/>
            <person name="Coblenz A."/>
            <person name="Coglievina M."/>
            <person name="Coissac E."/>
            <person name="Defoor E."/>
            <person name="Del Bino S."/>
            <person name="Delius H."/>
            <person name="Delneri D."/>
            <person name="de Wergifosse P."/>
            <person name="Dujon B."/>
            <person name="Durand P."/>
            <person name="Entian K.-D."/>
            <person name="Eraso P."/>
            <person name="Escribano V."/>
            <person name="Fabiani L."/>
            <person name="Fartmann B."/>
            <person name="Feroli F."/>
            <person name="Feuermann M."/>
            <person name="Frontali L."/>
            <person name="Garcia-Gonzalez M."/>
            <person name="Garcia-Saez M.I."/>
            <person name="Goffeau A."/>
            <person name="Guerreiro P."/>
            <person name="Hani J."/>
            <person name="Hansen M."/>
            <person name="Hebling U."/>
            <person name="Hernandez K."/>
            <person name="Heumann K."/>
            <person name="Hilger F."/>
            <person name="Hofmann B."/>
            <person name="Indge K.J."/>
            <person name="James C.M."/>
            <person name="Klima R."/>
            <person name="Koetter P."/>
            <person name="Kramer B."/>
            <person name="Kramer W."/>
            <person name="Lauquin G."/>
            <person name="Leuther H."/>
            <person name="Louis E.J."/>
            <person name="Maillier E."/>
            <person name="Marconi A."/>
            <person name="Martegani E."/>
            <person name="Mazon M.J."/>
            <person name="Mazzoni C."/>
            <person name="McReynolds A.D.K."/>
            <person name="Melchioretto P."/>
            <person name="Mewes H.-W."/>
            <person name="Minenkova O."/>
            <person name="Mueller-Auer S."/>
            <person name="Nawrocki A."/>
            <person name="Netter P."/>
            <person name="Neu R."/>
            <person name="Nombela C."/>
            <person name="Oliver S.G."/>
            <person name="Panzeri L."/>
            <person name="Paoluzi S."/>
            <person name="Plevani P."/>
            <person name="Portetelle D."/>
            <person name="Portillo F."/>
            <person name="Potier S."/>
            <person name="Purnelle B."/>
            <person name="Rieger M."/>
            <person name="Riles L."/>
            <person name="Rinaldi T."/>
            <person name="Robben J."/>
            <person name="Rodrigues-Pousada C."/>
            <person name="Rodriguez-Belmonte E."/>
            <person name="Rodriguez-Torres A.M."/>
            <person name="Rose M."/>
            <person name="Ruzzi M."/>
            <person name="Saliola M."/>
            <person name="Sanchez-Perez M."/>
            <person name="Schaefer B."/>
            <person name="Schaefer M."/>
            <person name="Scharfe M."/>
            <person name="Schmidheini T."/>
            <person name="Schreer A."/>
            <person name="Skala J."/>
            <person name="Souciet J.-L."/>
            <person name="Steensma H.Y."/>
            <person name="Talla E."/>
            <person name="Thierry A."/>
            <person name="Vandenbol M."/>
            <person name="van der Aart Q.J.M."/>
            <person name="Van Dyck L."/>
            <person name="Vanoni M."/>
            <person name="Verhasselt P."/>
            <person name="Voet M."/>
            <person name="Volckaert G."/>
            <person name="Wambutt R."/>
            <person name="Watson M.D."/>
            <person name="Weber N."/>
            <person name="Wedler E."/>
            <person name="Wedler H."/>
            <person name="Wipfli P."/>
            <person name="Wolf K."/>
            <person name="Wright L.F."/>
            <person name="Zaccaria P."/>
            <person name="Zimmermann M."/>
            <person name="Zollner A."/>
            <person name="Kleine K."/>
        </authorList>
    </citation>
    <scope>NUCLEOTIDE SEQUENCE [LARGE SCALE GENOMIC DNA]</scope>
    <source>
        <strain>ATCC 204508 / S288c</strain>
    </source>
</reference>
<reference key="5">
    <citation type="journal article" date="2014" name="G3 (Bethesda)">
        <title>The reference genome sequence of Saccharomyces cerevisiae: Then and now.</title>
        <authorList>
            <person name="Engel S.R."/>
            <person name="Dietrich F.S."/>
            <person name="Fisk D.G."/>
            <person name="Binkley G."/>
            <person name="Balakrishnan R."/>
            <person name="Costanzo M.C."/>
            <person name="Dwight S.S."/>
            <person name="Hitz B.C."/>
            <person name="Karra K."/>
            <person name="Nash R.S."/>
            <person name="Weng S."/>
            <person name="Wong E.D."/>
            <person name="Lloyd P."/>
            <person name="Skrzypek M.S."/>
            <person name="Miyasato S.R."/>
            <person name="Simison M."/>
            <person name="Cherry J.M."/>
        </authorList>
    </citation>
    <scope>GENOME REANNOTATION</scope>
    <source>
        <strain>ATCC 204508 / S288c</strain>
    </source>
</reference>
<reference key="6">
    <citation type="journal article" date="2007" name="Genome Res.">
        <title>Approaching a complete repository of sequence-verified protein-encoding clones for Saccharomyces cerevisiae.</title>
        <authorList>
            <person name="Hu Y."/>
            <person name="Rolfs A."/>
            <person name="Bhullar B."/>
            <person name="Murthy T.V.S."/>
            <person name="Zhu C."/>
            <person name="Berger M.F."/>
            <person name="Camargo A.A."/>
            <person name="Kelley F."/>
            <person name="McCarron S."/>
            <person name="Jepson D."/>
            <person name="Richardson A."/>
            <person name="Raphael J."/>
            <person name="Moreira D."/>
            <person name="Taycher E."/>
            <person name="Zuo D."/>
            <person name="Mohr S."/>
            <person name="Kane M.F."/>
            <person name="Williamson J."/>
            <person name="Simpson A.J.G."/>
            <person name="Bulyk M.L."/>
            <person name="Harlow E."/>
            <person name="Marsischky G."/>
            <person name="Kolodner R.D."/>
            <person name="LaBaer J."/>
        </authorList>
    </citation>
    <scope>NUCLEOTIDE SEQUENCE [GENOMIC DNA]</scope>
    <source>
        <strain>ATCC 204508 / S288c</strain>
    </source>
</reference>
<reference key="7">
    <citation type="journal article" date="1985" name="Eur. J. Biochem.">
        <title>Mutations affecting the enzymes involved in the utilization of 4-aminobutyric acid as nitrogen source by the yeast Saccharomyces cerevisiae.</title>
        <authorList>
            <person name="Ramos F."/>
            <person name="El Guezzar M."/>
            <person name="Grenson M."/>
            <person name="Wiame J.-M."/>
        </authorList>
    </citation>
    <scope>FUNCTION</scope>
    <scope>CATALYTIC ACTIVITY</scope>
    <scope>BIOPHYSICOCHEMICAL PROPERTIES</scope>
</reference>
<reference key="8">
    <citation type="journal article" date="2002" name="Genes Dev.">
        <title>Subcellular localization of the yeast proteome.</title>
        <authorList>
            <person name="Kumar A."/>
            <person name="Agarwal S."/>
            <person name="Heyman J.A."/>
            <person name="Matson S."/>
            <person name="Heidtman M."/>
            <person name="Piccirillo S."/>
            <person name="Umansky L."/>
            <person name="Drawid A."/>
            <person name="Jansen R."/>
            <person name="Liu Y."/>
            <person name="Cheung K.-H."/>
            <person name="Miller P."/>
            <person name="Gerstein M."/>
            <person name="Roeder G.S."/>
            <person name="Snyder M."/>
        </authorList>
    </citation>
    <scope>SUBCELLULAR LOCATION</scope>
</reference>
<reference key="9">
    <citation type="journal article" date="2003" name="Nature">
        <title>Global analysis of protein expression in yeast.</title>
        <authorList>
            <person name="Ghaemmaghami S."/>
            <person name="Huh W.-K."/>
            <person name="Bower K."/>
            <person name="Howson R.W."/>
            <person name="Belle A."/>
            <person name="Dephoure N."/>
            <person name="O'Shea E.K."/>
            <person name="Weissman J.S."/>
        </authorList>
    </citation>
    <scope>LEVEL OF PROTEIN EXPRESSION [LARGE SCALE ANALYSIS]</scope>
</reference>
<reference key="10">
    <citation type="journal article" date="2009" name="Appl. Environ. Microbiol.">
        <title>New insights into gamma-aminobutyric acid catabolism: evidence for gamma-hydroxybutyric acid and polyhydroxybutyrate synthesis in Saccharomyces cerevisiae.</title>
        <authorList>
            <person name="Bach B."/>
            <person name="Meudec E."/>
            <person name="Lepoutre J.-P."/>
            <person name="Rossignol T."/>
            <person name="Blondin B."/>
            <person name="Dequin S."/>
            <person name="Camarasa C."/>
        </authorList>
    </citation>
    <scope>FUNCTION</scope>
    <scope>INDUCTION</scope>
</reference>
<feature type="chain" id="PRO_0000120382" description="4-aminobutyrate aminotransferase">
    <location>
        <begin position="1"/>
        <end position="471"/>
    </location>
</feature>
<feature type="binding site" description="in other chain" evidence="1">
    <location>
        <begin position="135"/>
        <end position="136"/>
    </location>
    <ligand>
        <name>pyridoxal 5'-phosphate</name>
        <dbReference type="ChEBI" id="CHEBI:597326"/>
        <note>ligand shared between dimeric partners</note>
    </ligand>
</feature>
<feature type="binding site" evidence="1">
    <location>
        <position position="192"/>
    </location>
    <ligand>
        <name>substrate</name>
    </ligand>
</feature>
<feature type="binding site" evidence="1">
    <location>
        <position position="351"/>
    </location>
    <ligand>
        <name>pyridoxal 5'-phosphate</name>
        <dbReference type="ChEBI" id="CHEBI:597326"/>
        <note>ligand shared between dimeric partners</note>
    </ligand>
</feature>
<feature type="modified residue" description="N6-(pyridoxal phosphate)lysine" evidence="1">
    <location>
        <position position="326"/>
    </location>
</feature>
<feature type="sequence conflict" description="In Ref. 1; CAA36833 and 2; ABF58895." evidence="7" ref="1 2">
    <original>H</original>
    <variation>R</variation>
    <location>
        <position position="240"/>
    </location>
</feature>
<sequence>MSICEQYYPEEPTKPTVKTESIPGPESQKQLKELGEVFDTRPAYFLADYEKSLGNYITDVDGNTYLDLYAQISSIALGYNNPALIKAAQSPEMIRALVDRPALGNFPSKDLDKILKQILKSAPKGQDHVWSGLSGADANELAFKAAFIYYRAKQRGYDADFSEKENLSVMDNDAPGAPHLAVLSFKRAFHGRLFASGSTTCSKPIHKLDFPAFHWPHAEYPSYQYPLDENSDANRKEDDHCLAIVEELIKTWSIPVAALIIEPIQSEGGDNHASKYFLQKLRDITLKYNVVYIIDEVQTGVGATGKLWCHEYADIQPPVDLVTFSKKFQSAGYFFHDPKFIPNKPYRQFNTWCGEPARMIIAGAIGQEISDKKLTEQCSRVGDYLFKKLEGLQKKYPENFQNLRGKGRGTFIAWDLPTGEKRDLLLKKLKLNGCNVGGCAVHAVRLRPSLTFEEKHADIFIEALAKSVNEL</sequence>
<keyword id="KW-0032">Aminotransferase</keyword>
<keyword id="KW-0963">Cytoplasm</keyword>
<keyword id="KW-0663">Pyridoxal phosphate</keyword>
<keyword id="KW-1185">Reference proteome</keyword>
<keyword id="KW-0808">Transferase</keyword>
<comment type="function">
    <text evidence="4 5 6">Required for the degradation of gamma-aminobutyric acid (GABA), which is important for utilization of GABA as nitrogen source and for oxidative stress tolerance. Deaminates GABA to succinate semialdehyde, which in turn is converted to succinate by the succinate-semialdehyde dehydrogenase UGA2. Cannot transaminate beta-alanine (BAL).</text>
</comment>
<comment type="catalytic activity">
    <reaction evidence="4 8">
        <text>4-aminobutanoate + 2-oxoglutarate = succinate semialdehyde + L-glutamate</text>
        <dbReference type="Rhea" id="RHEA:23352"/>
        <dbReference type="ChEBI" id="CHEBI:16810"/>
        <dbReference type="ChEBI" id="CHEBI:29985"/>
        <dbReference type="ChEBI" id="CHEBI:57706"/>
        <dbReference type="ChEBI" id="CHEBI:59888"/>
        <dbReference type="EC" id="2.6.1.19"/>
    </reaction>
</comment>
<comment type="cofactor">
    <cofactor evidence="4">
        <name>pyridoxal 5'-phosphate</name>
        <dbReference type="ChEBI" id="CHEBI:597326"/>
    </cofactor>
</comment>
<comment type="biophysicochemical properties">
    <kinetics>
        <KM evidence="4">3.2 mM for 4-aminobutanoate</KM>
        <KM evidence="4">0.22 mM for 2-oxoglutarate</KM>
        <Vmax evidence="4">12.8 umol/min/mg enzyme</Vmax>
    </kinetics>
    <phDependence>
        <text evidence="6">Optimum pH is 8.3.</text>
    </phDependence>
</comment>
<comment type="subunit">
    <text evidence="4">Homodimer and homotetramer.</text>
</comment>
<comment type="subcellular location">
    <subcellularLocation>
        <location evidence="2">Cytoplasm</location>
    </subcellularLocation>
</comment>
<comment type="induction">
    <text evidence="5">Subject to nitrogen catabolite repression. Expression is low in the presence of the preferred nitrogen sources, and up-regulated by GABA.</text>
</comment>
<comment type="miscellaneous">
    <text evidence="3">Present with 573 molecules/cell in log phase SD medium.</text>
</comment>
<comment type="similarity">
    <text evidence="7">Belongs to the class-III pyridoxal-phosphate-dependent aminotransferase family.</text>
</comment>